<dbReference type="EMBL" id="X74480">
    <property type="protein sequence ID" value="CAA52579.1"/>
    <property type="molecule type" value="Genomic_DNA"/>
</dbReference>
<dbReference type="PIR" id="S36567">
    <property type="entry name" value="S36567"/>
</dbReference>
<dbReference type="RefSeq" id="NP_041832.1">
    <property type="nucleotide sequence ID" value="NC_001591.1"/>
</dbReference>
<dbReference type="PDB" id="6SMV">
    <property type="method" value="X-ray"/>
    <property type="resolution" value="2.14 A"/>
    <property type="chains" value="A=1-138"/>
</dbReference>
<dbReference type="PDBsum" id="6SMV"/>
<dbReference type="SMR" id="P36813"/>
<dbReference type="GeneID" id="1489444"/>
<dbReference type="KEGG" id="vg:1489444"/>
<dbReference type="OrthoDB" id="27353at10239"/>
<dbReference type="Proteomes" id="UP000009124">
    <property type="component" value="Genome"/>
</dbReference>
<dbReference type="GO" id="GO:0030430">
    <property type="term" value="C:host cell cytoplasm"/>
    <property type="evidence" value="ECO:0007669"/>
    <property type="project" value="UniProtKB-SubCell"/>
</dbReference>
<dbReference type="GO" id="GO:0042025">
    <property type="term" value="C:host cell nucleus"/>
    <property type="evidence" value="ECO:0007669"/>
    <property type="project" value="UniProtKB-SubCell"/>
</dbReference>
<dbReference type="GO" id="GO:0003677">
    <property type="term" value="F:DNA binding"/>
    <property type="evidence" value="ECO:0007669"/>
    <property type="project" value="UniProtKB-UniRule"/>
</dbReference>
<dbReference type="GO" id="GO:0008270">
    <property type="term" value="F:zinc ion binding"/>
    <property type="evidence" value="ECO:0007669"/>
    <property type="project" value="UniProtKB-KW"/>
</dbReference>
<dbReference type="GO" id="GO:0006351">
    <property type="term" value="P:DNA-templated transcription"/>
    <property type="evidence" value="ECO:0007669"/>
    <property type="project" value="UniProtKB-UniRule"/>
</dbReference>
<dbReference type="GO" id="GO:0006355">
    <property type="term" value="P:regulation of DNA-templated transcription"/>
    <property type="evidence" value="ECO:0007669"/>
    <property type="project" value="UniProtKB-UniRule"/>
</dbReference>
<dbReference type="GO" id="GO:0052150">
    <property type="term" value="P:symbiont-mediated perturbation of host apoptosis"/>
    <property type="evidence" value="ECO:0007669"/>
    <property type="project" value="UniProtKB-KW"/>
</dbReference>
<dbReference type="GO" id="GO:0039648">
    <property type="term" value="P:symbiont-mediated perturbation of host ubiquitin-like protein modification"/>
    <property type="evidence" value="ECO:0007669"/>
    <property type="project" value="UniProtKB-UniRule"/>
</dbReference>
<dbReference type="GO" id="GO:0052170">
    <property type="term" value="P:symbiont-mediated suppression of host innate immune response"/>
    <property type="evidence" value="ECO:0007669"/>
    <property type="project" value="UniProtKB-KW"/>
</dbReference>
<dbReference type="GO" id="GO:0039502">
    <property type="term" value="P:symbiont-mediated suppression of host type I interferon-mediated signaling pathway"/>
    <property type="evidence" value="ECO:0007669"/>
    <property type="project" value="UniProtKB-UniRule"/>
</dbReference>
<dbReference type="Gene3D" id="3.30.240.40">
    <property type="entry name" value="E6 early regulatory protein"/>
    <property type="match status" value="2"/>
</dbReference>
<dbReference type="HAMAP" id="MF_04006">
    <property type="entry name" value="HPV_E6"/>
    <property type="match status" value="1"/>
</dbReference>
<dbReference type="InterPro" id="IPR001334">
    <property type="entry name" value="E6"/>
</dbReference>
<dbReference type="InterPro" id="IPR038575">
    <property type="entry name" value="E6_sf"/>
</dbReference>
<dbReference type="Pfam" id="PF00518">
    <property type="entry name" value="E6"/>
    <property type="match status" value="1"/>
</dbReference>
<dbReference type="SUPFAM" id="SSF161229">
    <property type="entry name" value="E6 C-terminal domain-like"/>
    <property type="match status" value="2"/>
</dbReference>
<evidence type="ECO:0000255" key="1">
    <source>
        <dbReference type="HAMAP-Rule" id="MF_04006"/>
    </source>
</evidence>
<evidence type="ECO:0000305" key="2"/>
<evidence type="ECO:0007829" key="3">
    <source>
        <dbReference type="PDB" id="6SMV"/>
    </source>
</evidence>
<protein>
    <recommendedName>
        <fullName evidence="1">Protein E6</fullName>
    </recommendedName>
</protein>
<name>VE6_HPV49</name>
<organismHost>
    <name type="scientific">Homo sapiens</name>
    <name type="common">Human</name>
    <dbReference type="NCBI Taxonomy" id="9606"/>
</organismHost>
<feature type="chain" id="PRO_0000133367" description="Protein E6">
    <location>
        <begin position="1"/>
        <end position="138"/>
    </location>
</feature>
<feature type="zinc finger region" evidence="1">
    <location>
        <begin position="25"/>
        <end position="61"/>
    </location>
</feature>
<feature type="zinc finger region" evidence="1">
    <location>
        <begin position="98"/>
        <end position="134"/>
    </location>
</feature>
<feature type="helix" evidence="3">
    <location>
        <begin position="7"/>
        <end position="13"/>
    </location>
</feature>
<feature type="helix" evidence="3">
    <location>
        <begin position="18"/>
        <end position="20"/>
    </location>
</feature>
<feature type="strand" evidence="3">
    <location>
        <begin position="24"/>
        <end position="29"/>
    </location>
</feature>
<feature type="helix" evidence="3">
    <location>
        <begin position="34"/>
        <end position="42"/>
    </location>
</feature>
<feature type="strand" evidence="3">
    <location>
        <begin position="48"/>
        <end position="50"/>
    </location>
</feature>
<feature type="strand" evidence="3">
    <location>
        <begin position="53"/>
        <end position="56"/>
    </location>
</feature>
<feature type="helix" evidence="3">
    <location>
        <begin position="59"/>
        <end position="72"/>
    </location>
</feature>
<feature type="strand" evidence="3">
    <location>
        <begin position="73"/>
        <end position="79"/>
    </location>
</feature>
<feature type="helix" evidence="3">
    <location>
        <begin position="80"/>
        <end position="82"/>
    </location>
</feature>
<feature type="helix" evidence="3">
    <location>
        <begin position="83"/>
        <end position="87"/>
    </location>
</feature>
<feature type="turn" evidence="3">
    <location>
        <begin position="91"/>
        <end position="93"/>
    </location>
</feature>
<feature type="strand" evidence="3">
    <location>
        <begin position="96"/>
        <end position="98"/>
    </location>
</feature>
<feature type="turn" evidence="3">
    <location>
        <begin position="99"/>
        <end position="101"/>
    </location>
</feature>
<feature type="helix" evidence="3">
    <location>
        <begin position="107"/>
        <end position="115"/>
    </location>
</feature>
<feature type="strand" evidence="3">
    <location>
        <begin position="119"/>
        <end position="123"/>
    </location>
</feature>
<feature type="strand" evidence="3">
    <location>
        <begin position="126"/>
        <end position="129"/>
    </location>
</feature>
<gene>
    <name evidence="1" type="primary">E6</name>
</gene>
<proteinExistence type="evidence at protein level"/>
<reference key="1">
    <citation type="journal article" date="1994" name="Curr. Top. Microbiol. Immunol.">
        <title>Primer-directed sequencing of human papillomavirus types.</title>
        <authorList>
            <person name="Delius H."/>
            <person name="Hofmann B."/>
        </authorList>
    </citation>
    <scope>NUCLEOTIDE SEQUENCE [GENOMIC DNA]</scope>
</reference>
<comment type="function">
    <text evidence="1">Plays a major role in the induction and maintenance of cellular transformation. E6 associates with host UBE3A/E6-AP ubiquitin-protein ligase and modulates its activity. Protects host keratinocytes from apoptosis by mediating the degradation of host BAK1. May also inhibit host immune response.</text>
</comment>
<comment type="subunit">
    <text evidence="1">Forms homodimers. Interacts with ubiquitin-protein ligase UBE3A/E6-AP; this interaction stimulates UBE3A ubiquitin activity. Interacts with host BAK1.</text>
</comment>
<comment type="subcellular location">
    <subcellularLocation>
        <location evidence="1">Host cytoplasm</location>
    </subcellularLocation>
    <subcellularLocation>
        <location evidence="1">Host nucleus</location>
    </subcellularLocation>
</comment>
<comment type="similarity">
    <text evidence="1 2">Belongs to the papillomaviridae E6 protein family.</text>
</comment>
<accession>P36813</accession>
<sequence length="138" mass="16202">MARPVKVCELAHHLNIPIWEVLLPCNFCTGFLTYQELLEFDYKDFNLLWKDGFVFGCCAACAYRSAYHEFTNYHQEIVVGIEIEGRAAANIAEIVVRCLICLKRLDLLEKLDICAQHREFHRVRNRWKGVCRHCRVIE</sequence>
<keyword id="KW-0002">3D-structure</keyword>
<keyword id="KW-0010">Activator</keyword>
<keyword id="KW-0238">DNA-binding</keyword>
<keyword id="KW-0244">Early protein</keyword>
<keyword id="KW-1035">Host cytoplasm</keyword>
<keyword id="KW-1048">Host nucleus</keyword>
<keyword id="KW-0945">Host-virus interaction</keyword>
<keyword id="KW-1090">Inhibition of host innate immune response by virus</keyword>
<keyword id="KW-0479">Metal-binding</keyword>
<keyword id="KW-1119">Modulation of host cell apoptosis by virus</keyword>
<keyword id="KW-0804">Transcription</keyword>
<keyword id="KW-0805">Transcription regulation</keyword>
<keyword id="KW-0899">Viral immunoevasion</keyword>
<keyword id="KW-0862">Zinc</keyword>
<keyword id="KW-0863">Zinc-finger</keyword>
<organism>
    <name type="scientific">Human papillomavirus type 49</name>
    <dbReference type="NCBI Taxonomy" id="10616"/>
    <lineage>
        <taxon>Viruses</taxon>
        <taxon>Monodnaviria</taxon>
        <taxon>Shotokuvirae</taxon>
        <taxon>Cossaviricota</taxon>
        <taxon>Papovaviricetes</taxon>
        <taxon>Zurhausenvirales</taxon>
        <taxon>Papillomaviridae</taxon>
        <taxon>Firstpapillomavirinae</taxon>
        <taxon>Betapapillomavirus</taxon>
        <taxon>Betapapillomavirus 3</taxon>
    </lineage>
</organism>